<dbReference type="EC" id="1.4.1.4"/>
<dbReference type="EMBL" id="AY840085">
    <property type="protein sequence ID" value="AAW19065.1"/>
    <property type="molecule type" value="Genomic_DNA"/>
</dbReference>
<dbReference type="RefSeq" id="WP_012289198.1">
    <property type="nucleotide sequence ID" value="NZ_JBDFRA010000004.1"/>
</dbReference>
<dbReference type="SMR" id="Q5MBG2"/>
<dbReference type="GeneID" id="68693512"/>
<dbReference type="GO" id="GO:0004352">
    <property type="term" value="F:glutamate dehydrogenase (NAD+) activity"/>
    <property type="evidence" value="ECO:0007669"/>
    <property type="project" value="TreeGrafter"/>
</dbReference>
<dbReference type="GO" id="GO:0004354">
    <property type="term" value="F:glutamate dehydrogenase (NADP+) activity"/>
    <property type="evidence" value="ECO:0007669"/>
    <property type="project" value="UniProtKB-EC"/>
</dbReference>
<dbReference type="GO" id="GO:0006538">
    <property type="term" value="P:glutamate catabolic process"/>
    <property type="evidence" value="ECO:0007669"/>
    <property type="project" value="TreeGrafter"/>
</dbReference>
<dbReference type="CDD" id="cd01076">
    <property type="entry name" value="NAD_bind_1_Glu_DH"/>
    <property type="match status" value="1"/>
</dbReference>
<dbReference type="Gene3D" id="3.40.50.10860">
    <property type="entry name" value="Leucine Dehydrogenase, chain A, domain 1"/>
    <property type="match status" value="1"/>
</dbReference>
<dbReference type="Gene3D" id="3.40.50.720">
    <property type="entry name" value="NAD(P)-binding Rossmann-like Domain"/>
    <property type="match status" value="1"/>
</dbReference>
<dbReference type="InterPro" id="IPR046346">
    <property type="entry name" value="Aminoacid_DH-like_N_sf"/>
</dbReference>
<dbReference type="InterPro" id="IPR006095">
    <property type="entry name" value="Glu/Leu/Phe/Val/Trp_DH"/>
</dbReference>
<dbReference type="InterPro" id="IPR006096">
    <property type="entry name" value="Glu/Leu/Phe/Val/Trp_DH_C"/>
</dbReference>
<dbReference type="InterPro" id="IPR006097">
    <property type="entry name" value="Glu/Leu/Phe/Val/Trp_DH_dimer"/>
</dbReference>
<dbReference type="InterPro" id="IPR033524">
    <property type="entry name" value="Glu/Leu/Phe/Val_DH_AS"/>
</dbReference>
<dbReference type="InterPro" id="IPR014362">
    <property type="entry name" value="Glu_DH"/>
</dbReference>
<dbReference type="InterPro" id="IPR036291">
    <property type="entry name" value="NAD(P)-bd_dom_sf"/>
</dbReference>
<dbReference type="InterPro" id="IPR033922">
    <property type="entry name" value="NAD_bind_Glu_DH"/>
</dbReference>
<dbReference type="PANTHER" id="PTHR11606">
    <property type="entry name" value="GLUTAMATE DEHYDROGENASE"/>
    <property type="match status" value="1"/>
</dbReference>
<dbReference type="PANTHER" id="PTHR11606:SF13">
    <property type="entry name" value="GLUTAMATE DEHYDROGENASE 1, MITOCHONDRIAL"/>
    <property type="match status" value="1"/>
</dbReference>
<dbReference type="Pfam" id="PF00208">
    <property type="entry name" value="ELFV_dehydrog"/>
    <property type="match status" value="1"/>
</dbReference>
<dbReference type="Pfam" id="PF02812">
    <property type="entry name" value="ELFV_dehydrog_N"/>
    <property type="match status" value="1"/>
</dbReference>
<dbReference type="PIRSF" id="PIRSF000185">
    <property type="entry name" value="Glu_DH"/>
    <property type="match status" value="1"/>
</dbReference>
<dbReference type="PRINTS" id="PR00082">
    <property type="entry name" value="GLFDHDRGNASE"/>
</dbReference>
<dbReference type="SMART" id="SM00839">
    <property type="entry name" value="ELFV_dehydrog"/>
    <property type="match status" value="1"/>
</dbReference>
<dbReference type="SUPFAM" id="SSF53223">
    <property type="entry name" value="Aminoacid dehydrogenase-like, N-terminal domain"/>
    <property type="match status" value="1"/>
</dbReference>
<dbReference type="SUPFAM" id="SSF51735">
    <property type="entry name" value="NAD(P)-binding Rossmann-fold domains"/>
    <property type="match status" value="1"/>
</dbReference>
<dbReference type="PROSITE" id="PS00074">
    <property type="entry name" value="GLFV_DEHYDROGENASE"/>
    <property type="match status" value="1"/>
</dbReference>
<name>DHE4_HALSI</name>
<organism>
    <name type="scientific">Halobacterium salinarum</name>
    <name type="common">Halobacterium halobium</name>
    <dbReference type="NCBI Taxonomy" id="2242"/>
    <lineage>
        <taxon>Archaea</taxon>
        <taxon>Methanobacteriati</taxon>
        <taxon>Methanobacteriota</taxon>
        <taxon>Stenosarchaea group</taxon>
        <taxon>Halobacteria</taxon>
        <taxon>Halobacteriales</taxon>
        <taxon>Halobacteriaceae</taxon>
        <taxon>Halobacterium</taxon>
    </lineage>
</organism>
<keyword id="KW-0903">Direct protein sequencing</keyword>
<keyword id="KW-0521">NADP</keyword>
<keyword id="KW-0560">Oxidoreductase</keyword>
<sequence length="417" mass="45008">MPEANPFESLQEQLDDAGEFLDVNADVLERLKHPERVLETTLSVEMDDGTIETFKAFRSQFNGDRGPYKGGIRYHPGVTRDEVKALSGWMVYKTAVADIPYGGGKGGIILDPEEYSDSELERITRAFATELRPFIGEDKDVPAPDVNTGQREMNWIKDTYETLEDTTAPGVITGKALENGGSEGRVNATGRSTMFAAREVFDYLDRDLSDATVAVQGYGNAGSVAAKLIADQGADVVAVSDSSGAVHNPDGLDTRAVKAFKTETGSVSGYEGATEELSNEALLTMDVDLLVPAALENAIDEDLAHDVDADVVVEAANGPLTPDADDVLTERGVTVVPDILANAGGVTVSYFEWVQNRQRFQWTEDRVNEELEAIITDAFDAMTDAHEDAGTPNLRTAAYVVAVQRVVDAYEGSGSWP</sequence>
<accession>Q5MBG2</accession>
<evidence type="ECO:0000250" key="1"/>
<evidence type="ECO:0000255" key="2">
    <source>
        <dbReference type="PROSITE-ProRule" id="PRU10011"/>
    </source>
</evidence>
<evidence type="ECO:0000269" key="3">
    <source>
    </source>
</evidence>
<evidence type="ECO:0000269" key="4">
    <source>
    </source>
</evidence>
<evidence type="ECO:0000305" key="5"/>
<evidence type="ECO:0000305" key="6">
    <source>
    </source>
</evidence>
<comment type="catalytic activity">
    <reaction evidence="3">
        <text>L-glutamate + NADP(+) + H2O = 2-oxoglutarate + NH4(+) + NADPH + H(+)</text>
        <dbReference type="Rhea" id="RHEA:11612"/>
        <dbReference type="ChEBI" id="CHEBI:15377"/>
        <dbReference type="ChEBI" id="CHEBI:15378"/>
        <dbReference type="ChEBI" id="CHEBI:16810"/>
        <dbReference type="ChEBI" id="CHEBI:28938"/>
        <dbReference type="ChEBI" id="CHEBI:29985"/>
        <dbReference type="ChEBI" id="CHEBI:57783"/>
        <dbReference type="ChEBI" id="CHEBI:58349"/>
        <dbReference type="EC" id="1.4.1.4"/>
    </reaction>
</comment>
<comment type="subunit">
    <text evidence="1">Homohexamer.</text>
</comment>
<comment type="miscellaneous">
    <text evidence="6">Strain NRC-36014 contains 4 distinct glutamate dehydrogenases while strain NRC-1 contains only 3.</text>
</comment>
<comment type="similarity">
    <text evidence="5">Belongs to the Glu/Leu/Phe/Val dehydrogenases family.</text>
</comment>
<protein>
    <recommendedName>
        <fullName>NADP-specific glutamate dehydrogenase A1</fullName>
        <ecNumber>1.4.1.4</ecNumber>
    </recommendedName>
</protein>
<gene>
    <name type="primary">gdhA1</name>
</gene>
<reference key="1">
    <citation type="journal article" date="2005" name="Gene">
        <title>The discovery of four distinct glutamate dehydrogenase genes in a strain of Halobacterium salinarum.</title>
        <authorList>
            <person name="Ingoldsby L.M."/>
            <person name="Geoghegan K.F."/>
            <person name="Hayden B.M."/>
            <person name="Engel P.C."/>
        </authorList>
    </citation>
    <scope>NUCLEOTIDE SEQUENCE [GENOMIC DNA]</scope>
    <scope>PROTEIN SEQUENCE OF 2-31</scope>
    <source>
        <strain>NRC-36014</strain>
    </source>
</reference>
<reference key="2">
    <citation type="journal article" date="2002" name="FEMS Microbiol. Lett.">
        <title>Glutamate dehydrogenase of Halobacterium salinarum: evidence that the gene sequence currently assigned to the NADP+-dependent enzyme is in fact that of the NAD+-dependent glutamate dehydrogenase.</title>
        <authorList>
            <person name="Hayden B.M."/>
            <person name="Bonete M.J."/>
            <person name="Brown P.E."/>
            <person name="Moir A.J."/>
            <person name="Engel P.C."/>
        </authorList>
    </citation>
    <scope>PROTEIN SEQUENCE OF 2-9</scope>
    <scope>CATALYTIC ACTIVITY</scope>
    <source>
        <strain>NRC-36014</strain>
    </source>
</reference>
<proteinExistence type="evidence at protein level"/>
<feature type="initiator methionine" description="Removed" evidence="3 4">
    <location>
        <position position="1"/>
    </location>
</feature>
<feature type="chain" id="PRO_0000428789" description="NADP-specific glutamate dehydrogenase A1">
    <location>
        <begin position="2"/>
        <end position="417"/>
    </location>
</feature>
<feature type="active site" evidence="2">
    <location>
        <position position="105"/>
    </location>
</feature>
<feature type="sequence conflict" description="In Ref. 2; AA sequence." evidence="5" ref="2">
    <original>S</original>
    <variation>V</variation>
    <location>
        <position position="9"/>
    </location>
</feature>